<gene>
    <name type="primary">nms</name>
</gene>
<proteinExistence type="evidence at protein level"/>
<keyword id="KW-0025">Alternative splicing</keyword>
<keyword id="KW-0027">Amidation</keyword>
<keyword id="KW-0165">Cleavage on pair of basic residues</keyword>
<keyword id="KW-0903">Direct protein sequencing</keyword>
<keyword id="KW-0964">Secreted</keyword>
<keyword id="KW-0732">Signal</keyword>
<dbReference type="EMBL" id="AY652767">
    <property type="protein sequence ID" value="AAV74390.1"/>
    <property type="molecule type" value="mRNA"/>
</dbReference>
<dbReference type="EMBL" id="AM115659">
    <property type="protein sequence ID" value="CAJ40970.1"/>
    <property type="molecule type" value="mRNA"/>
</dbReference>
<dbReference type="EMBL" id="AM115660">
    <property type="protein sequence ID" value="CAJ40971.1"/>
    <property type="molecule type" value="mRNA"/>
</dbReference>
<dbReference type="EMBL" id="AM115661">
    <property type="protein sequence ID" value="CAJ40972.1"/>
    <property type="molecule type" value="mRNA"/>
</dbReference>
<dbReference type="EMBL" id="AM115662">
    <property type="protein sequence ID" value="CAJ40973.1"/>
    <property type="molecule type" value="mRNA"/>
</dbReference>
<dbReference type="EMBL" id="AM115663">
    <property type="protein sequence ID" value="CAJ40974.1"/>
    <property type="molecule type" value="mRNA"/>
</dbReference>
<dbReference type="EMBL" id="AM115664">
    <property type="protein sequence ID" value="CAJ40975.1"/>
    <property type="molecule type" value="mRNA"/>
</dbReference>
<dbReference type="GO" id="GO:0005576">
    <property type="term" value="C:extracellular region"/>
    <property type="evidence" value="ECO:0007669"/>
    <property type="project" value="UniProtKB-SubCell"/>
</dbReference>
<dbReference type="InterPro" id="IPR018070">
    <property type="entry name" value="Neuromedin-U_amidation-site"/>
</dbReference>
<dbReference type="InterPro" id="IPR043253">
    <property type="entry name" value="NmS"/>
</dbReference>
<dbReference type="PANTHER" id="PTHR32414">
    <property type="entry name" value="NEUROMEDIN-S"/>
    <property type="match status" value="1"/>
</dbReference>
<dbReference type="PANTHER" id="PTHR32414:SF2">
    <property type="entry name" value="NEUROMEDIN-S"/>
    <property type="match status" value="1"/>
</dbReference>
<dbReference type="PROSITE" id="PS00967">
    <property type="entry name" value="NMU"/>
    <property type="match status" value="1"/>
</dbReference>
<reference key="1">
    <citation type="journal article" date="2005" name="Regul. Pept.">
        <title>Identification and molecular cloning of a novel neuromedin U analog from the skin secretions of toad Bombina maxima.</title>
        <authorList>
            <person name="Lee W.H."/>
            <person name="Liu S.B."/>
            <person name="Shen J.H."/>
            <person name="Jin Y."/>
            <person name="Lai R."/>
            <person name="Zhang Y."/>
        </authorList>
    </citation>
    <scope>NUCLEOTIDE SEQUENCE [MRNA] (ISOFORM 1)</scope>
    <scope>PROTEIN SEQUENCE OF 120-136</scope>
    <scope>FUNCTION</scope>
    <scope>SUBCELLULAR LOCATION</scope>
    <scope>TISSUE SPECIFICITY</scope>
    <scope>MASS SPECTROMETRY</scope>
    <scope>AMIDATION AT ASN-136</scope>
    <source>
        <tissue>Skin secretion</tissue>
    </source>
</reference>
<reference key="2">
    <citation type="journal article" date="2006" name="Biochem. Biophys. Res. Commun.">
        <title>Structural and functional analogs of the novel mammalian neuropeptide, neuromedin S (NmS), in the dermal venoms of Eurasian bombinid toads.</title>
        <authorList>
            <person name="Chen T."/>
            <person name="Zhou M."/>
            <person name="Walker B."/>
            <person name="Harriot P."/>
            <person name="Mori K."/>
            <person name="Miyazato M."/>
            <person name="Kangawa K."/>
            <person name="Shaw C."/>
        </authorList>
    </citation>
    <scope>NUCLEOTIDE SEQUENCE [MRNA] (ISOFORMS 1; 2; 3; 4; 5 AND 6)</scope>
    <scope>PROTEIN SEQUENCE OF 92-134 AND 120-136</scope>
    <scope>SUBCELLULAR LOCATION</scope>
    <scope>TISSUE SPECIFICITY</scope>
    <scope>MASS SPECTROMETRY</scope>
    <scope>AMIDATION AT ASN-136</scope>
    <source>
        <tissue>Skin secretion</tissue>
    </source>
</reference>
<feature type="signal peptide" evidence="1">
    <location>
        <begin position="1"/>
        <end position="27"/>
    </location>
</feature>
<feature type="propeptide" id="PRO_0000417379">
    <location>
        <begin position="28"/>
        <end position="89"/>
    </location>
</feature>
<feature type="propeptide" id="PRO_0000417380">
    <location>
        <begin position="92"/>
        <end position="117"/>
    </location>
</feature>
<feature type="peptide" id="PRO_0000417381" description="Neuromedin-S-17">
    <location>
        <begin position="120"/>
        <end position="136"/>
    </location>
</feature>
<feature type="propeptide" id="PRO_0000417382">
    <location>
        <begin position="140"/>
        <end position="145"/>
    </location>
</feature>
<feature type="modified residue" description="Asparagine amide" evidence="2 3">
    <location>
        <position position="136"/>
    </location>
</feature>
<feature type="splice variant" id="VSP_043620" description="In isoform 2." evidence="4">
    <location>
        <begin position="46"/>
        <end position="62"/>
    </location>
</feature>
<feature type="splice variant" id="VSP_043621" description="In isoform 6." evidence="4">
    <location>
        <begin position="83"/>
        <end position="95"/>
    </location>
</feature>
<feature type="splice variant" id="VSP_043622" description="In isoform 5." evidence="4">
    <location>
        <begin position="84"/>
        <end position="108"/>
    </location>
</feature>
<feature type="splice variant" id="VSP_043623" description="In isoform 4." evidence="4">
    <location>
        <begin position="92"/>
        <end position="107"/>
    </location>
</feature>
<feature type="splice variant" id="VSP_043624" description="In isoform 3." evidence="4">
    <location>
        <begin position="108"/>
        <end position="119"/>
    </location>
</feature>
<accession>Q4QXT8</accession>
<accession>Q1HA21</accession>
<accession>Q1HA22</accession>
<accession>Q1HA23</accession>
<accession>Q1HA24</accession>
<accession>Q1HA25</accession>
<organism>
    <name type="scientific">Bombina maxima</name>
    <name type="common">Giant fire-bellied toad</name>
    <name type="synonym">Chinese red belly toad</name>
    <dbReference type="NCBI Taxonomy" id="161274"/>
    <lineage>
        <taxon>Eukaryota</taxon>
        <taxon>Metazoa</taxon>
        <taxon>Chordata</taxon>
        <taxon>Craniata</taxon>
        <taxon>Vertebrata</taxon>
        <taxon>Euteleostomi</taxon>
        <taxon>Amphibia</taxon>
        <taxon>Batrachia</taxon>
        <taxon>Anura</taxon>
        <taxon>Bombinatoridae</taxon>
        <taxon>Bombina</taxon>
    </lineage>
</organism>
<protein>
    <recommendedName>
        <fullName>Neuromedin-S</fullName>
    </recommendedName>
    <alternativeName>
        <fullName>Neuromedin-U</fullName>
    </alternativeName>
    <component>
        <recommendedName>
            <fullName>Neuromedin-S-17</fullName>
            <shortName>NmS-17</shortName>
        </recommendedName>
        <alternativeName>
            <fullName>Neuromedin-U-17</fullName>
            <shortName>NmU-17</shortName>
        </alternativeName>
    </component>
</protein>
<sequence length="145" mass="16679">MRSEKHLLPLPLLLAICCLGTLHLSSGFPQSVPSYLEGLDIPESERHAFCFSQWTALQDQEQIPSFVMDLCSSIYNRMKVNEENNHEIYKRFLFQFSRAKDPSLKIGESQIATAEYTKRDSSGIVGRPFFLFRPRNGRKVSINEH</sequence>
<evidence type="ECO:0000255" key="1"/>
<evidence type="ECO:0000269" key="2">
    <source>
    </source>
</evidence>
<evidence type="ECO:0000269" key="3">
    <source>
    </source>
</evidence>
<evidence type="ECO:0000303" key="4">
    <source>
    </source>
</evidence>
<evidence type="ECO:0000305" key="5"/>
<comment type="function">
    <molecule>Neuromedin-S-17</molecule>
    <text evidence="2">Stimulates uterine smooth muscle contraction (EC(50)=1.6 nM). Synthetic peptide NmS-17 induces calcium mobilization in CHO cells transfected with either human FM-3/GPR66 (EC(50)=0.085 nM) or FM-4/TGR-1 (EC(50)=0.231 nM) NmU/NmS receptors.</text>
</comment>
<comment type="subcellular location">
    <subcellularLocation>
        <location evidence="2 3">Secreted</location>
    </subcellularLocation>
</comment>
<comment type="alternative products">
    <event type="alternative splicing"/>
    <isoform>
        <id>Q4QXT8-1</id>
        <name>1</name>
        <name>BM1</name>
        <sequence type="displayed"/>
    </isoform>
    <isoform>
        <id>Q4QXT8-2</id>
        <name>2</name>
        <name>BM2</name>
        <sequence type="described" ref="VSP_043620"/>
    </isoform>
    <isoform>
        <id>Q4QXT8-3</id>
        <name>3</name>
        <name>BM3</name>
        <sequence type="described" ref="VSP_043624"/>
    </isoform>
    <isoform>
        <id>Q4QXT8-4</id>
        <name>4</name>
        <name>BM4</name>
        <sequence type="described" ref="VSP_043623"/>
    </isoform>
    <isoform>
        <id>Q4QXT8-5</id>
        <name>5</name>
        <name>BM5</name>
        <sequence type="described" ref="VSP_043622"/>
    </isoform>
    <isoform>
        <id>Q4QXT8-6</id>
        <name>6</name>
        <name>BM6</name>
        <sequence type="described" ref="VSP_043621"/>
    </isoform>
</comment>
<comment type="tissue specificity">
    <text evidence="2 3">Expressed by the skin glands.</text>
</comment>
<comment type="mass spectrometry" mass="1965.0" method="FAB" evidence="2"/>
<comment type="mass spectrometry" mass="1964.0" method="Electrospray" evidence="3">
    <text>Non-protonated fragment.</text>
</comment>
<comment type="mass spectrometry" mass="3800.0" method="Electrospray" evidence="3">
    <molecule>Isoform 3</molecule>
    <text>The measured mass is of the active peptide NmS-33 generated only from isoform 3. Non-protonated fragment. The measured range is 92-124.</text>
</comment>
<comment type="miscellaneous">
    <text>Isoform 3 encodes peptide NmS-33, at positions 92 to 124, as a result of splicing out of an exon that encodes a processing site which generates NmS-17. Similar 33-mers and 36-mers have been isolated from human and from mouse and rat, respectively, although they do not arise by alternative splicing.</text>
</comment>
<comment type="miscellaneous">
    <molecule>Isoform 3</molecule>
    <text evidence="5">Contains an active peptide, NmS-33, at positions 92-124.</text>
</comment>
<comment type="similarity">
    <text evidence="5">Belongs to the NmU family.</text>
</comment>
<name>NMS_BOMMX</name>